<feature type="chain" id="PRO_0000136064" description="Shikimate dehydrogenase (NADP(+))">
    <location>
        <begin position="1"/>
        <end position="262"/>
    </location>
</feature>
<feature type="active site" description="Proton acceptor" evidence="1">
    <location>
        <position position="64"/>
    </location>
</feature>
<feature type="binding site" evidence="1">
    <location>
        <begin position="14"/>
        <end position="16"/>
    </location>
    <ligand>
        <name>shikimate</name>
        <dbReference type="ChEBI" id="CHEBI:36208"/>
    </ligand>
</feature>
<feature type="binding site" evidence="1">
    <location>
        <position position="60"/>
    </location>
    <ligand>
        <name>shikimate</name>
        <dbReference type="ChEBI" id="CHEBI:36208"/>
    </ligand>
</feature>
<feature type="binding site" evidence="1">
    <location>
        <position position="85"/>
    </location>
    <ligand>
        <name>shikimate</name>
        <dbReference type="ChEBI" id="CHEBI:36208"/>
    </ligand>
</feature>
<feature type="binding site" evidence="1">
    <location>
        <position position="100"/>
    </location>
    <ligand>
        <name>shikimate</name>
        <dbReference type="ChEBI" id="CHEBI:36208"/>
    </ligand>
</feature>
<feature type="binding site" evidence="1">
    <location>
        <begin position="121"/>
        <end position="125"/>
    </location>
    <ligand>
        <name>NADP(+)</name>
        <dbReference type="ChEBI" id="CHEBI:58349"/>
    </ligand>
</feature>
<feature type="binding site" evidence="1">
    <location>
        <begin position="145"/>
        <end position="150"/>
    </location>
    <ligand>
        <name>NADP(+)</name>
        <dbReference type="ChEBI" id="CHEBI:58349"/>
    </ligand>
</feature>
<feature type="binding site" evidence="1">
    <location>
        <position position="203"/>
    </location>
    <ligand>
        <name>NADP(+)</name>
        <dbReference type="ChEBI" id="CHEBI:58349"/>
    </ligand>
</feature>
<feature type="binding site" evidence="1">
    <location>
        <position position="205"/>
    </location>
    <ligand>
        <name>shikimate</name>
        <dbReference type="ChEBI" id="CHEBI:36208"/>
    </ligand>
</feature>
<feature type="binding site" evidence="1">
    <location>
        <position position="227"/>
    </location>
    <ligand>
        <name>NADP(+)</name>
        <dbReference type="ChEBI" id="CHEBI:58349"/>
    </ligand>
</feature>
<gene>
    <name evidence="1" type="primary">aroE</name>
    <name type="ordered locus">PAE1913</name>
</gene>
<sequence length="262" mass="28185">MYFAVIGAHVRGKSASPAMHTASFKALGINAVYIAVDVPKEELGCFAQIARLNFRGFNVTIPHKEEVVKFLDALSAEARAIGAVNTVLVERNLMVGYNTDAHAVYKLAGGHMEGAEVLILGAGGAARAALFAAIKAGAKKIYVKNRTAERAEALAREFREKFERPIEAIPWSGAVKADVVINATPIHDAVIADLTGASLYVEFVYTPTPRTKMVEEAERLGVKVVDGVDLLVEQGAQAEKIWLGVEPDRAVMKKAVLEFLGL</sequence>
<comment type="function">
    <text evidence="1">Involved in the biosynthesis of the chorismate, which leads to the biosynthesis of aromatic amino acids. Catalyzes the reversible NADPH linked reduction of 3-dehydroshikimate (DHSA) to yield shikimate (SA).</text>
</comment>
<comment type="catalytic activity">
    <reaction evidence="1">
        <text>shikimate + NADP(+) = 3-dehydroshikimate + NADPH + H(+)</text>
        <dbReference type="Rhea" id="RHEA:17737"/>
        <dbReference type="ChEBI" id="CHEBI:15378"/>
        <dbReference type="ChEBI" id="CHEBI:16630"/>
        <dbReference type="ChEBI" id="CHEBI:36208"/>
        <dbReference type="ChEBI" id="CHEBI:57783"/>
        <dbReference type="ChEBI" id="CHEBI:58349"/>
        <dbReference type="EC" id="1.1.1.25"/>
    </reaction>
</comment>
<comment type="pathway">
    <text evidence="1">Metabolic intermediate biosynthesis; chorismate biosynthesis; chorismate from D-erythrose 4-phosphate and phosphoenolpyruvate: step 4/7.</text>
</comment>
<comment type="subunit">
    <text evidence="1">Homodimer.</text>
</comment>
<comment type="similarity">
    <text evidence="1">Belongs to the shikimate dehydrogenase family.</text>
</comment>
<reference key="1">
    <citation type="journal article" date="2002" name="Proc. Natl. Acad. Sci. U.S.A.">
        <title>Genome sequence of the hyperthermophilic crenarchaeon Pyrobaculum aerophilum.</title>
        <authorList>
            <person name="Fitz-Gibbon S.T."/>
            <person name="Ladner H."/>
            <person name="Kim U.-J."/>
            <person name="Stetter K.O."/>
            <person name="Simon M.I."/>
            <person name="Miller J.H."/>
        </authorList>
    </citation>
    <scope>NUCLEOTIDE SEQUENCE [LARGE SCALE GENOMIC DNA]</scope>
    <source>
        <strain>ATCC 51768 / DSM 7523 / JCM 9630 / CIP 104966 / NBRC 100827 / IM2</strain>
    </source>
</reference>
<dbReference type="EC" id="1.1.1.25" evidence="1"/>
<dbReference type="EMBL" id="AE009441">
    <property type="protein sequence ID" value="AAL63813.1"/>
    <property type="molecule type" value="Genomic_DNA"/>
</dbReference>
<dbReference type="RefSeq" id="WP_011008284.1">
    <property type="nucleotide sequence ID" value="NC_003364.1"/>
</dbReference>
<dbReference type="SMR" id="Q8ZW89"/>
<dbReference type="STRING" id="178306.PAE1913"/>
<dbReference type="EnsemblBacteria" id="AAL63813">
    <property type="protein sequence ID" value="AAL63813"/>
    <property type="gene ID" value="PAE1913"/>
</dbReference>
<dbReference type="GeneID" id="1464136"/>
<dbReference type="KEGG" id="pai:PAE1913"/>
<dbReference type="PATRIC" id="fig|178306.9.peg.1417"/>
<dbReference type="eggNOG" id="arCOG01033">
    <property type="taxonomic scope" value="Archaea"/>
</dbReference>
<dbReference type="HOGENOM" id="CLU_044063_4_1_2"/>
<dbReference type="InParanoid" id="Q8ZW89"/>
<dbReference type="UniPathway" id="UPA00053">
    <property type="reaction ID" value="UER00087"/>
</dbReference>
<dbReference type="Proteomes" id="UP000002439">
    <property type="component" value="Chromosome"/>
</dbReference>
<dbReference type="GO" id="GO:0050661">
    <property type="term" value="F:NADP binding"/>
    <property type="evidence" value="ECO:0007669"/>
    <property type="project" value="InterPro"/>
</dbReference>
<dbReference type="GO" id="GO:0004764">
    <property type="term" value="F:shikimate 3-dehydrogenase (NADP+) activity"/>
    <property type="evidence" value="ECO:0000318"/>
    <property type="project" value="GO_Central"/>
</dbReference>
<dbReference type="GO" id="GO:0008652">
    <property type="term" value="P:amino acid biosynthetic process"/>
    <property type="evidence" value="ECO:0007669"/>
    <property type="project" value="UniProtKB-KW"/>
</dbReference>
<dbReference type="GO" id="GO:0009073">
    <property type="term" value="P:aromatic amino acid family biosynthetic process"/>
    <property type="evidence" value="ECO:0007669"/>
    <property type="project" value="UniProtKB-KW"/>
</dbReference>
<dbReference type="GO" id="GO:0009423">
    <property type="term" value="P:chorismate biosynthetic process"/>
    <property type="evidence" value="ECO:0000318"/>
    <property type="project" value="GO_Central"/>
</dbReference>
<dbReference type="GO" id="GO:0019632">
    <property type="term" value="P:shikimate metabolic process"/>
    <property type="evidence" value="ECO:0000318"/>
    <property type="project" value="GO_Central"/>
</dbReference>
<dbReference type="CDD" id="cd01065">
    <property type="entry name" value="NAD_bind_Shikimate_DH"/>
    <property type="match status" value="1"/>
</dbReference>
<dbReference type="Gene3D" id="3.40.50.10860">
    <property type="entry name" value="Leucine Dehydrogenase, chain A, domain 1"/>
    <property type="match status" value="1"/>
</dbReference>
<dbReference type="Gene3D" id="3.40.50.720">
    <property type="entry name" value="NAD(P)-binding Rossmann-like Domain"/>
    <property type="match status" value="1"/>
</dbReference>
<dbReference type="HAMAP" id="MF_00222">
    <property type="entry name" value="Shikimate_DH_AroE"/>
    <property type="match status" value="1"/>
</dbReference>
<dbReference type="InterPro" id="IPR046346">
    <property type="entry name" value="Aminoacid_DH-like_N_sf"/>
</dbReference>
<dbReference type="InterPro" id="IPR036291">
    <property type="entry name" value="NAD(P)-bd_dom_sf"/>
</dbReference>
<dbReference type="InterPro" id="IPR041121">
    <property type="entry name" value="SDH_C"/>
</dbReference>
<dbReference type="InterPro" id="IPR011342">
    <property type="entry name" value="Shikimate_DH"/>
</dbReference>
<dbReference type="InterPro" id="IPR013708">
    <property type="entry name" value="Shikimate_DH-bd_N"/>
</dbReference>
<dbReference type="InterPro" id="IPR022893">
    <property type="entry name" value="Shikimate_DH_fam"/>
</dbReference>
<dbReference type="InterPro" id="IPR006151">
    <property type="entry name" value="Shikm_DH/Glu-tRNA_Rdtase"/>
</dbReference>
<dbReference type="NCBIfam" id="TIGR00507">
    <property type="entry name" value="aroE"/>
    <property type="match status" value="1"/>
</dbReference>
<dbReference type="PANTHER" id="PTHR21089:SF1">
    <property type="entry name" value="BIFUNCTIONAL 3-DEHYDROQUINATE DEHYDRATASE_SHIKIMATE DEHYDROGENASE, CHLOROPLASTIC"/>
    <property type="match status" value="1"/>
</dbReference>
<dbReference type="PANTHER" id="PTHR21089">
    <property type="entry name" value="SHIKIMATE DEHYDROGENASE"/>
    <property type="match status" value="1"/>
</dbReference>
<dbReference type="Pfam" id="PF18317">
    <property type="entry name" value="SDH_C"/>
    <property type="match status" value="1"/>
</dbReference>
<dbReference type="Pfam" id="PF01488">
    <property type="entry name" value="Shikimate_DH"/>
    <property type="match status" value="1"/>
</dbReference>
<dbReference type="Pfam" id="PF08501">
    <property type="entry name" value="Shikimate_dh_N"/>
    <property type="match status" value="1"/>
</dbReference>
<dbReference type="SUPFAM" id="SSF53223">
    <property type="entry name" value="Aminoacid dehydrogenase-like, N-terminal domain"/>
    <property type="match status" value="1"/>
</dbReference>
<dbReference type="SUPFAM" id="SSF51735">
    <property type="entry name" value="NAD(P)-binding Rossmann-fold domains"/>
    <property type="match status" value="1"/>
</dbReference>
<evidence type="ECO:0000255" key="1">
    <source>
        <dbReference type="HAMAP-Rule" id="MF_00222"/>
    </source>
</evidence>
<accession>Q8ZW89</accession>
<name>AROE_PYRAE</name>
<keyword id="KW-0028">Amino-acid biosynthesis</keyword>
<keyword id="KW-0057">Aromatic amino acid biosynthesis</keyword>
<keyword id="KW-0521">NADP</keyword>
<keyword id="KW-0560">Oxidoreductase</keyword>
<keyword id="KW-1185">Reference proteome</keyword>
<proteinExistence type="inferred from homology"/>
<organism>
    <name type="scientific">Pyrobaculum aerophilum (strain ATCC 51768 / DSM 7523 / JCM 9630 / CIP 104966 / NBRC 100827 / IM2)</name>
    <dbReference type="NCBI Taxonomy" id="178306"/>
    <lineage>
        <taxon>Archaea</taxon>
        <taxon>Thermoproteota</taxon>
        <taxon>Thermoprotei</taxon>
        <taxon>Thermoproteales</taxon>
        <taxon>Thermoproteaceae</taxon>
        <taxon>Pyrobaculum</taxon>
    </lineage>
</organism>
<protein>
    <recommendedName>
        <fullName evidence="1">Shikimate dehydrogenase (NADP(+))</fullName>
        <shortName evidence="1">SDH</shortName>
        <ecNumber evidence="1">1.1.1.25</ecNumber>
    </recommendedName>
</protein>